<proteinExistence type="inferred from homology"/>
<feature type="chain" id="PRO_0000347584" description="Alanine--tRNA ligase">
    <location>
        <begin position="1"/>
        <end position="876"/>
    </location>
</feature>
<feature type="binding site" evidence="1">
    <location>
        <position position="565"/>
    </location>
    <ligand>
        <name>Zn(2+)</name>
        <dbReference type="ChEBI" id="CHEBI:29105"/>
    </ligand>
</feature>
<feature type="binding site" evidence="1">
    <location>
        <position position="569"/>
    </location>
    <ligand>
        <name>Zn(2+)</name>
        <dbReference type="ChEBI" id="CHEBI:29105"/>
    </ligand>
</feature>
<feature type="binding site" evidence="1">
    <location>
        <position position="667"/>
    </location>
    <ligand>
        <name>Zn(2+)</name>
        <dbReference type="ChEBI" id="CHEBI:29105"/>
    </ligand>
</feature>
<feature type="binding site" evidence="1">
    <location>
        <position position="671"/>
    </location>
    <ligand>
        <name>Zn(2+)</name>
        <dbReference type="ChEBI" id="CHEBI:29105"/>
    </ligand>
</feature>
<comment type="function">
    <text evidence="1">Catalyzes the attachment of alanine to tRNA(Ala) in a two-step reaction: alanine is first activated by ATP to form Ala-AMP and then transferred to the acceptor end of tRNA(Ala). Also edits incorrectly charged Ser-tRNA(Ala) and Gly-tRNA(Ala) via its editing domain.</text>
</comment>
<comment type="catalytic activity">
    <reaction evidence="1">
        <text>tRNA(Ala) + L-alanine + ATP = L-alanyl-tRNA(Ala) + AMP + diphosphate</text>
        <dbReference type="Rhea" id="RHEA:12540"/>
        <dbReference type="Rhea" id="RHEA-COMP:9657"/>
        <dbReference type="Rhea" id="RHEA-COMP:9923"/>
        <dbReference type="ChEBI" id="CHEBI:30616"/>
        <dbReference type="ChEBI" id="CHEBI:33019"/>
        <dbReference type="ChEBI" id="CHEBI:57972"/>
        <dbReference type="ChEBI" id="CHEBI:78442"/>
        <dbReference type="ChEBI" id="CHEBI:78497"/>
        <dbReference type="ChEBI" id="CHEBI:456215"/>
        <dbReference type="EC" id="6.1.1.7"/>
    </reaction>
</comment>
<comment type="cofactor">
    <cofactor evidence="1">
        <name>Zn(2+)</name>
        <dbReference type="ChEBI" id="CHEBI:29105"/>
    </cofactor>
    <text evidence="1">Binds 1 zinc ion per subunit.</text>
</comment>
<comment type="subcellular location">
    <subcellularLocation>
        <location evidence="1">Cytoplasm</location>
    </subcellularLocation>
</comment>
<comment type="domain">
    <text evidence="1">Consists of three domains; the N-terminal catalytic domain, the editing domain and the C-terminal C-Ala domain. The editing domain removes incorrectly charged amino acids, while the C-Ala domain, along with tRNA(Ala), serves as a bridge to cooperatively bring together the editing and aminoacylation centers thus stimulating deacylation of misacylated tRNAs.</text>
</comment>
<comment type="similarity">
    <text evidence="1">Belongs to the class-II aminoacyl-tRNA synthetase family.</text>
</comment>
<keyword id="KW-0030">Aminoacyl-tRNA synthetase</keyword>
<keyword id="KW-0067">ATP-binding</keyword>
<keyword id="KW-0963">Cytoplasm</keyword>
<keyword id="KW-0436">Ligase</keyword>
<keyword id="KW-0479">Metal-binding</keyword>
<keyword id="KW-0547">Nucleotide-binding</keyword>
<keyword id="KW-0648">Protein biosynthesis</keyword>
<keyword id="KW-1185">Reference proteome</keyword>
<keyword id="KW-0694">RNA-binding</keyword>
<keyword id="KW-0820">tRNA-binding</keyword>
<keyword id="KW-0862">Zinc</keyword>
<evidence type="ECO:0000255" key="1">
    <source>
        <dbReference type="HAMAP-Rule" id="MF_00036"/>
    </source>
</evidence>
<accession>A8ZY67</accession>
<dbReference type="EC" id="6.1.1.7" evidence="1"/>
<dbReference type="EMBL" id="CP000859">
    <property type="protein sequence ID" value="ABW67074.1"/>
    <property type="molecule type" value="Genomic_DNA"/>
</dbReference>
<dbReference type="RefSeq" id="WP_012174691.1">
    <property type="nucleotide sequence ID" value="NC_009943.1"/>
</dbReference>
<dbReference type="SMR" id="A8ZY67"/>
<dbReference type="STRING" id="96561.Dole_1268"/>
<dbReference type="KEGG" id="dol:Dole_1268"/>
<dbReference type="eggNOG" id="COG0013">
    <property type="taxonomic scope" value="Bacteria"/>
</dbReference>
<dbReference type="HOGENOM" id="CLU_004485_1_1_7"/>
<dbReference type="OrthoDB" id="9803884at2"/>
<dbReference type="Proteomes" id="UP000008561">
    <property type="component" value="Chromosome"/>
</dbReference>
<dbReference type="GO" id="GO:0005829">
    <property type="term" value="C:cytosol"/>
    <property type="evidence" value="ECO:0007669"/>
    <property type="project" value="TreeGrafter"/>
</dbReference>
<dbReference type="GO" id="GO:0004813">
    <property type="term" value="F:alanine-tRNA ligase activity"/>
    <property type="evidence" value="ECO:0007669"/>
    <property type="project" value="UniProtKB-UniRule"/>
</dbReference>
<dbReference type="GO" id="GO:0002161">
    <property type="term" value="F:aminoacyl-tRNA deacylase activity"/>
    <property type="evidence" value="ECO:0007669"/>
    <property type="project" value="TreeGrafter"/>
</dbReference>
<dbReference type="GO" id="GO:0005524">
    <property type="term" value="F:ATP binding"/>
    <property type="evidence" value="ECO:0007669"/>
    <property type="project" value="UniProtKB-UniRule"/>
</dbReference>
<dbReference type="GO" id="GO:0000049">
    <property type="term" value="F:tRNA binding"/>
    <property type="evidence" value="ECO:0007669"/>
    <property type="project" value="UniProtKB-KW"/>
</dbReference>
<dbReference type="GO" id="GO:0008270">
    <property type="term" value="F:zinc ion binding"/>
    <property type="evidence" value="ECO:0007669"/>
    <property type="project" value="UniProtKB-UniRule"/>
</dbReference>
<dbReference type="GO" id="GO:0006419">
    <property type="term" value="P:alanyl-tRNA aminoacylation"/>
    <property type="evidence" value="ECO:0007669"/>
    <property type="project" value="UniProtKB-UniRule"/>
</dbReference>
<dbReference type="GO" id="GO:0045892">
    <property type="term" value="P:negative regulation of DNA-templated transcription"/>
    <property type="evidence" value="ECO:0007669"/>
    <property type="project" value="TreeGrafter"/>
</dbReference>
<dbReference type="CDD" id="cd00673">
    <property type="entry name" value="AlaRS_core"/>
    <property type="match status" value="1"/>
</dbReference>
<dbReference type="FunFam" id="3.10.310.40:FF:000001">
    <property type="entry name" value="Alanine--tRNA ligase"/>
    <property type="match status" value="1"/>
</dbReference>
<dbReference type="FunFam" id="3.30.54.20:FF:000001">
    <property type="entry name" value="Alanine--tRNA ligase"/>
    <property type="match status" value="1"/>
</dbReference>
<dbReference type="FunFam" id="3.30.930.10:FF:000004">
    <property type="entry name" value="Alanine--tRNA ligase"/>
    <property type="match status" value="1"/>
</dbReference>
<dbReference type="FunFam" id="3.30.980.10:FF:000004">
    <property type="entry name" value="Alanine--tRNA ligase, cytoplasmic"/>
    <property type="match status" value="1"/>
</dbReference>
<dbReference type="Gene3D" id="2.40.30.130">
    <property type="match status" value="1"/>
</dbReference>
<dbReference type="Gene3D" id="3.10.310.40">
    <property type="match status" value="1"/>
</dbReference>
<dbReference type="Gene3D" id="3.30.54.20">
    <property type="match status" value="1"/>
</dbReference>
<dbReference type="Gene3D" id="6.10.250.550">
    <property type="match status" value="1"/>
</dbReference>
<dbReference type="Gene3D" id="3.30.930.10">
    <property type="entry name" value="Bira Bifunctional Protein, Domain 2"/>
    <property type="match status" value="1"/>
</dbReference>
<dbReference type="Gene3D" id="3.30.980.10">
    <property type="entry name" value="Threonyl-trna Synthetase, Chain A, domain 2"/>
    <property type="match status" value="1"/>
</dbReference>
<dbReference type="HAMAP" id="MF_00036_B">
    <property type="entry name" value="Ala_tRNA_synth_B"/>
    <property type="match status" value="1"/>
</dbReference>
<dbReference type="InterPro" id="IPR045864">
    <property type="entry name" value="aa-tRNA-synth_II/BPL/LPL"/>
</dbReference>
<dbReference type="InterPro" id="IPR002318">
    <property type="entry name" value="Ala-tRNA-lgiase_IIc"/>
</dbReference>
<dbReference type="InterPro" id="IPR018162">
    <property type="entry name" value="Ala-tRNA-ligase_IIc_anticod-bd"/>
</dbReference>
<dbReference type="InterPro" id="IPR018165">
    <property type="entry name" value="Ala-tRNA-synth_IIc_core"/>
</dbReference>
<dbReference type="InterPro" id="IPR018164">
    <property type="entry name" value="Ala-tRNA-synth_IIc_N"/>
</dbReference>
<dbReference type="InterPro" id="IPR050058">
    <property type="entry name" value="Ala-tRNA_ligase"/>
</dbReference>
<dbReference type="InterPro" id="IPR023033">
    <property type="entry name" value="Ala_tRNA_ligase_euk/bac"/>
</dbReference>
<dbReference type="InterPro" id="IPR003156">
    <property type="entry name" value="DHHA1_dom"/>
</dbReference>
<dbReference type="InterPro" id="IPR018163">
    <property type="entry name" value="Thr/Ala-tRNA-synth_IIc_edit"/>
</dbReference>
<dbReference type="InterPro" id="IPR009000">
    <property type="entry name" value="Transl_B-barrel_sf"/>
</dbReference>
<dbReference type="InterPro" id="IPR012947">
    <property type="entry name" value="tRNA_SAD"/>
</dbReference>
<dbReference type="NCBIfam" id="TIGR00344">
    <property type="entry name" value="alaS"/>
    <property type="match status" value="1"/>
</dbReference>
<dbReference type="PANTHER" id="PTHR11777:SF9">
    <property type="entry name" value="ALANINE--TRNA LIGASE, CYTOPLASMIC"/>
    <property type="match status" value="1"/>
</dbReference>
<dbReference type="PANTHER" id="PTHR11777">
    <property type="entry name" value="ALANYL-TRNA SYNTHETASE"/>
    <property type="match status" value="1"/>
</dbReference>
<dbReference type="Pfam" id="PF02272">
    <property type="entry name" value="DHHA1"/>
    <property type="match status" value="1"/>
</dbReference>
<dbReference type="Pfam" id="PF01411">
    <property type="entry name" value="tRNA-synt_2c"/>
    <property type="match status" value="1"/>
</dbReference>
<dbReference type="Pfam" id="PF07973">
    <property type="entry name" value="tRNA_SAD"/>
    <property type="match status" value="1"/>
</dbReference>
<dbReference type="PRINTS" id="PR00980">
    <property type="entry name" value="TRNASYNTHALA"/>
</dbReference>
<dbReference type="SMART" id="SM00863">
    <property type="entry name" value="tRNA_SAD"/>
    <property type="match status" value="1"/>
</dbReference>
<dbReference type="SUPFAM" id="SSF55681">
    <property type="entry name" value="Class II aaRS and biotin synthetases"/>
    <property type="match status" value="1"/>
</dbReference>
<dbReference type="SUPFAM" id="SSF101353">
    <property type="entry name" value="Putative anticodon-binding domain of alanyl-tRNA synthetase (AlaRS)"/>
    <property type="match status" value="1"/>
</dbReference>
<dbReference type="SUPFAM" id="SSF55186">
    <property type="entry name" value="ThrRS/AlaRS common domain"/>
    <property type="match status" value="1"/>
</dbReference>
<dbReference type="SUPFAM" id="SSF50447">
    <property type="entry name" value="Translation proteins"/>
    <property type="match status" value="1"/>
</dbReference>
<dbReference type="PROSITE" id="PS50860">
    <property type="entry name" value="AA_TRNA_LIGASE_II_ALA"/>
    <property type="match status" value="1"/>
</dbReference>
<gene>
    <name evidence="1" type="primary">alaS</name>
    <name type="ordered locus">Dole_1268</name>
</gene>
<protein>
    <recommendedName>
        <fullName evidence="1">Alanine--tRNA ligase</fullName>
        <ecNumber evidence="1">6.1.1.7</ecNumber>
    </recommendedName>
    <alternativeName>
        <fullName evidence="1">Alanyl-tRNA synthetase</fullName>
        <shortName evidence="1">AlaRS</shortName>
    </alternativeName>
</protein>
<reference key="1">
    <citation type="submission" date="2007-10" db="EMBL/GenBank/DDBJ databases">
        <title>Complete sequence of Desulfococcus oleovorans Hxd3.</title>
        <authorList>
            <consortium name="US DOE Joint Genome Institute"/>
            <person name="Copeland A."/>
            <person name="Lucas S."/>
            <person name="Lapidus A."/>
            <person name="Barry K."/>
            <person name="Glavina del Rio T."/>
            <person name="Dalin E."/>
            <person name="Tice H."/>
            <person name="Pitluck S."/>
            <person name="Kiss H."/>
            <person name="Brettin T."/>
            <person name="Bruce D."/>
            <person name="Detter J.C."/>
            <person name="Han C."/>
            <person name="Schmutz J."/>
            <person name="Larimer F."/>
            <person name="Land M."/>
            <person name="Hauser L."/>
            <person name="Kyrpides N."/>
            <person name="Kim E."/>
            <person name="Wawrik B."/>
            <person name="Richardson P."/>
        </authorList>
    </citation>
    <scope>NUCLEOTIDE SEQUENCE [LARGE SCALE GENOMIC DNA]</scope>
    <source>
        <strain>DSM 6200 / JCM 39069 / Hxd3</strain>
    </source>
</reference>
<name>SYA_DESOH</name>
<organism>
    <name type="scientific">Desulfosudis oleivorans (strain DSM 6200 / JCM 39069 / Hxd3)</name>
    <name type="common">Desulfococcus oleovorans</name>
    <dbReference type="NCBI Taxonomy" id="96561"/>
    <lineage>
        <taxon>Bacteria</taxon>
        <taxon>Pseudomonadati</taxon>
        <taxon>Thermodesulfobacteriota</taxon>
        <taxon>Desulfobacteria</taxon>
        <taxon>Desulfobacterales</taxon>
        <taxon>Desulfosudaceae</taxon>
        <taxon>Desulfosudis</taxon>
    </lineage>
</organism>
<sequence length="876" mass="94646">MTGNEARKTFLDYFENQGHRVVRSSSLVPQADPTLLFVNAGMVQFKRVFMGEEKRDYTTATTSQKCVRAGGKHNDLENVGYTARHHTFFEMLGNFSFGDYFKERAIELAWDLLLNGYKLPEDKLSVSVFHEDDEAFSIWKDRIGLAESRIARLGEKDNFWSMGDTGPCGPCSEIYMDRGEKYGCGRPDCAPGCDCDRFMEIWNMVFMQYNRQASGELTPLPHPSIDTGMGLERICAVIQDRDTNYETDLFIPIIRGIEAASGKTYGQAPDMDVCMKVIADHSRAAAFLIGDGVLPSNEGKGYVLRRILRRAIRYGRQLGLTRPFLSRTAGTVFEVMAEPYPELKENASFITNVLENEEVRFSETLDNGLRLLSETLDGMAAKGESVIPGGVIFKLYDTYGFPVDIVRDVVREKMIGLDMEGFDAAMAEQKAKSRSVVDFSKQPEAYRNLSAKGMKTGFVGYAGLAAQATVLALVNGGSELETATAGQEIEIVTDTTPFYGASGGQMGDVGVITADGLEITVTDTIKDPTGLVIHKGQVASGTVKKGQTISLAVDEDRRRATAANHTATHLLHAALGGIVGDHVKQAGSMVSPDRMRFDFTHFSMLDRATLDRIEVFVNDRIRENRAVTISEMSMDQAMEQGATALFEEKYGDTVRVVAVDGVSKELCGGTHAQRTGDIGLFKILSEASVASGVRRIEAVTGAGAVAFVQEQMGILAEAAGMLKESPAALAARIQKLLAESRTMAKEIAGLKTSLATASMEGPKSDDAKTLNGVKVIARTVTADNPAALRDLADRLKDKLGSGVVVLGAAADGKAFLIVSVSRDLTGRFKAGDIVREAAAVVGGKGGGRPDMAQAGGPQPEHLEAAIQKACDMIGKG</sequence>